<feature type="chain" id="PRO_1000146376" description="Small ribosomal subunit protein uS19">
    <location>
        <begin position="1"/>
        <end position="93"/>
    </location>
</feature>
<reference key="1">
    <citation type="journal article" date="2008" name="Foodborne Pathog. Dis.">
        <title>The complete genome sequence and analysis of the human pathogen Campylobacter lari.</title>
        <authorList>
            <person name="Miller W.G."/>
            <person name="Wang G."/>
            <person name="Binnewies T.T."/>
            <person name="Parker C.T."/>
        </authorList>
    </citation>
    <scope>NUCLEOTIDE SEQUENCE [LARGE SCALE GENOMIC DNA]</scope>
    <source>
        <strain>RM2100 / D67 / ATCC BAA-1060</strain>
    </source>
</reference>
<name>RS19_CAMLR</name>
<organism>
    <name type="scientific">Campylobacter lari (strain RM2100 / D67 / ATCC BAA-1060)</name>
    <dbReference type="NCBI Taxonomy" id="306263"/>
    <lineage>
        <taxon>Bacteria</taxon>
        <taxon>Pseudomonadati</taxon>
        <taxon>Campylobacterota</taxon>
        <taxon>Epsilonproteobacteria</taxon>
        <taxon>Campylobacterales</taxon>
        <taxon>Campylobacteraceae</taxon>
        <taxon>Campylobacter</taxon>
    </lineage>
</organism>
<sequence length="93" mass="10436">MARSLKKGPFVDDHVMKKVIAAKKVNDGKPIKTWSRRSTIIPDMIGLTFNVHNGKSFIPVYITENHIGYKLGEFAPTRTFKGHKGSVQKKIGK</sequence>
<dbReference type="EMBL" id="CP000932">
    <property type="protein sequence ID" value="ACM63429.1"/>
    <property type="molecule type" value="Genomic_DNA"/>
</dbReference>
<dbReference type="RefSeq" id="WP_012660815.1">
    <property type="nucleotide sequence ID" value="NC_012039.1"/>
</dbReference>
<dbReference type="SMR" id="B9KEE4"/>
<dbReference type="STRING" id="306263.Cla_0063"/>
<dbReference type="KEGG" id="cla:CLA_0063"/>
<dbReference type="PATRIC" id="fig|306263.5.peg.62"/>
<dbReference type="eggNOG" id="COG0185">
    <property type="taxonomic scope" value="Bacteria"/>
</dbReference>
<dbReference type="HOGENOM" id="CLU_144911_0_1_7"/>
<dbReference type="Proteomes" id="UP000007727">
    <property type="component" value="Chromosome"/>
</dbReference>
<dbReference type="GO" id="GO:0005737">
    <property type="term" value="C:cytoplasm"/>
    <property type="evidence" value="ECO:0007669"/>
    <property type="project" value="UniProtKB-ARBA"/>
</dbReference>
<dbReference type="GO" id="GO:0015935">
    <property type="term" value="C:small ribosomal subunit"/>
    <property type="evidence" value="ECO:0007669"/>
    <property type="project" value="InterPro"/>
</dbReference>
<dbReference type="GO" id="GO:0019843">
    <property type="term" value="F:rRNA binding"/>
    <property type="evidence" value="ECO:0007669"/>
    <property type="project" value="UniProtKB-UniRule"/>
</dbReference>
<dbReference type="GO" id="GO:0003735">
    <property type="term" value="F:structural constituent of ribosome"/>
    <property type="evidence" value="ECO:0007669"/>
    <property type="project" value="InterPro"/>
</dbReference>
<dbReference type="GO" id="GO:0000028">
    <property type="term" value="P:ribosomal small subunit assembly"/>
    <property type="evidence" value="ECO:0007669"/>
    <property type="project" value="TreeGrafter"/>
</dbReference>
<dbReference type="GO" id="GO:0006412">
    <property type="term" value="P:translation"/>
    <property type="evidence" value="ECO:0007669"/>
    <property type="project" value="UniProtKB-UniRule"/>
</dbReference>
<dbReference type="FunFam" id="3.30.860.10:FF:000001">
    <property type="entry name" value="30S ribosomal protein S19"/>
    <property type="match status" value="1"/>
</dbReference>
<dbReference type="Gene3D" id="3.30.860.10">
    <property type="entry name" value="30s Ribosomal Protein S19, Chain A"/>
    <property type="match status" value="1"/>
</dbReference>
<dbReference type="HAMAP" id="MF_00531">
    <property type="entry name" value="Ribosomal_uS19"/>
    <property type="match status" value="1"/>
</dbReference>
<dbReference type="InterPro" id="IPR002222">
    <property type="entry name" value="Ribosomal_uS19"/>
</dbReference>
<dbReference type="InterPro" id="IPR005732">
    <property type="entry name" value="Ribosomal_uS19_bac-type"/>
</dbReference>
<dbReference type="InterPro" id="IPR020934">
    <property type="entry name" value="Ribosomal_uS19_CS"/>
</dbReference>
<dbReference type="InterPro" id="IPR023575">
    <property type="entry name" value="Ribosomal_uS19_SF"/>
</dbReference>
<dbReference type="NCBIfam" id="TIGR01050">
    <property type="entry name" value="rpsS_bact"/>
    <property type="match status" value="1"/>
</dbReference>
<dbReference type="PANTHER" id="PTHR11880">
    <property type="entry name" value="RIBOSOMAL PROTEIN S19P FAMILY MEMBER"/>
    <property type="match status" value="1"/>
</dbReference>
<dbReference type="PANTHER" id="PTHR11880:SF8">
    <property type="entry name" value="SMALL RIBOSOMAL SUBUNIT PROTEIN US19M"/>
    <property type="match status" value="1"/>
</dbReference>
<dbReference type="Pfam" id="PF00203">
    <property type="entry name" value="Ribosomal_S19"/>
    <property type="match status" value="1"/>
</dbReference>
<dbReference type="PIRSF" id="PIRSF002144">
    <property type="entry name" value="Ribosomal_S19"/>
    <property type="match status" value="1"/>
</dbReference>
<dbReference type="PRINTS" id="PR00975">
    <property type="entry name" value="RIBOSOMALS19"/>
</dbReference>
<dbReference type="SUPFAM" id="SSF54570">
    <property type="entry name" value="Ribosomal protein S19"/>
    <property type="match status" value="1"/>
</dbReference>
<dbReference type="PROSITE" id="PS00323">
    <property type="entry name" value="RIBOSOMAL_S19"/>
    <property type="match status" value="1"/>
</dbReference>
<keyword id="KW-1185">Reference proteome</keyword>
<keyword id="KW-0687">Ribonucleoprotein</keyword>
<keyword id="KW-0689">Ribosomal protein</keyword>
<keyword id="KW-0694">RNA-binding</keyword>
<keyword id="KW-0699">rRNA-binding</keyword>
<accession>B9KEE4</accession>
<proteinExistence type="inferred from homology"/>
<protein>
    <recommendedName>
        <fullName evidence="1">Small ribosomal subunit protein uS19</fullName>
    </recommendedName>
    <alternativeName>
        <fullName evidence="2">30S ribosomal protein S19</fullName>
    </alternativeName>
</protein>
<gene>
    <name evidence="1" type="primary">rpsS</name>
    <name type="ordered locus">Cla_0063</name>
</gene>
<comment type="function">
    <text evidence="1">Protein S19 forms a complex with S13 that binds strongly to the 16S ribosomal RNA.</text>
</comment>
<comment type="similarity">
    <text evidence="1">Belongs to the universal ribosomal protein uS19 family.</text>
</comment>
<evidence type="ECO:0000255" key="1">
    <source>
        <dbReference type="HAMAP-Rule" id="MF_00531"/>
    </source>
</evidence>
<evidence type="ECO:0000305" key="2"/>